<evidence type="ECO:0000255" key="1">
    <source>
        <dbReference type="HAMAP-Rule" id="MF_00294"/>
    </source>
</evidence>
<evidence type="ECO:0000305" key="2"/>
<accession>Q5GU11</accession>
<reference key="1">
    <citation type="journal article" date="2005" name="Nucleic Acids Res.">
        <title>The genome sequence of Xanthomonas oryzae pathovar oryzae KACC10331, the bacterial blight pathogen of rice.</title>
        <authorList>
            <person name="Lee B.-M."/>
            <person name="Park Y.-J."/>
            <person name="Park D.-S."/>
            <person name="Kang H.-W."/>
            <person name="Kim J.-G."/>
            <person name="Song E.-S."/>
            <person name="Park I.-C."/>
            <person name="Yoon U.-H."/>
            <person name="Hahn J.-H."/>
            <person name="Koo B.-S."/>
            <person name="Lee G.-B."/>
            <person name="Kim H."/>
            <person name="Park H.-S."/>
            <person name="Yoon K.-O."/>
            <person name="Kim J.-H."/>
            <person name="Jung C.-H."/>
            <person name="Koh N.-H."/>
            <person name="Seo J.-S."/>
            <person name="Go S.-J."/>
        </authorList>
    </citation>
    <scope>NUCLEOTIDE SEQUENCE [LARGE SCALE GENOMIC DNA]</scope>
    <source>
        <strain>KACC10331 / KXO85</strain>
    </source>
</reference>
<gene>
    <name evidence="1" type="primary">rpmG</name>
    <name type="ordered locus">XOO4558</name>
</gene>
<sequence>MAKGKRDKIRMISSAATGHFYTTDKNKKNTPGKMEMMKYDPVVRKHVMYKEGKIK</sequence>
<organism>
    <name type="scientific">Xanthomonas oryzae pv. oryzae (strain KACC10331 / KXO85)</name>
    <dbReference type="NCBI Taxonomy" id="291331"/>
    <lineage>
        <taxon>Bacteria</taxon>
        <taxon>Pseudomonadati</taxon>
        <taxon>Pseudomonadota</taxon>
        <taxon>Gammaproteobacteria</taxon>
        <taxon>Lysobacterales</taxon>
        <taxon>Lysobacteraceae</taxon>
        <taxon>Xanthomonas</taxon>
    </lineage>
</organism>
<keyword id="KW-1185">Reference proteome</keyword>
<keyword id="KW-0687">Ribonucleoprotein</keyword>
<keyword id="KW-0689">Ribosomal protein</keyword>
<name>RL33_XANOR</name>
<comment type="similarity">
    <text evidence="1">Belongs to the bacterial ribosomal protein bL33 family.</text>
</comment>
<proteinExistence type="inferred from homology"/>
<dbReference type="EMBL" id="AE013598">
    <property type="protein sequence ID" value="AAW77812.1"/>
    <property type="molecule type" value="Genomic_DNA"/>
</dbReference>
<dbReference type="SMR" id="Q5GU11"/>
<dbReference type="STRING" id="291331.XOO4558"/>
<dbReference type="KEGG" id="xoo:XOO4558"/>
<dbReference type="HOGENOM" id="CLU_190949_1_1_6"/>
<dbReference type="Proteomes" id="UP000006735">
    <property type="component" value="Chromosome"/>
</dbReference>
<dbReference type="GO" id="GO:0022625">
    <property type="term" value="C:cytosolic large ribosomal subunit"/>
    <property type="evidence" value="ECO:0007669"/>
    <property type="project" value="TreeGrafter"/>
</dbReference>
<dbReference type="GO" id="GO:0003735">
    <property type="term" value="F:structural constituent of ribosome"/>
    <property type="evidence" value="ECO:0007669"/>
    <property type="project" value="InterPro"/>
</dbReference>
<dbReference type="GO" id="GO:0006412">
    <property type="term" value="P:translation"/>
    <property type="evidence" value="ECO:0007669"/>
    <property type="project" value="UniProtKB-UniRule"/>
</dbReference>
<dbReference type="FunFam" id="2.20.28.120:FF:000001">
    <property type="entry name" value="50S ribosomal protein L33"/>
    <property type="match status" value="1"/>
</dbReference>
<dbReference type="Gene3D" id="2.20.28.120">
    <property type="entry name" value="Ribosomal protein L33"/>
    <property type="match status" value="1"/>
</dbReference>
<dbReference type="HAMAP" id="MF_00294">
    <property type="entry name" value="Ribosomal_bL33"/>
    <property type="match status" value="1"/>
</dbReference>
<dbReference type="InterPro" id="IPR001705">
    <property type="entry name" value="Ribosomal_bL33"/>
</dbReference>
<dbReference type="InterPro" id="IPR018264">
    <property type="entry name" value="Ribosomal_bL33_CS"/>
</dbReference>
<dbReference type="InterPro" id="IPR038584">
    <property type="entry name" value="Ribosomal_bL33_sf"/>
</dbReference>
<dbReference type="InterPro" id="IPR011332">
    <property type="entry name" value="Ribosomal_zn-bd"/>
</dbReference>
<dbReference type="NCBIfam" id="NF001860">
    <property type="entry name" value="PRK00595.1"/>
    <property type="match status" value="1"/>
</dbReference>
<dbReference type="NCBIfam" id="TIGR01023">
    <property type="entry name" value="rpmG_bact"/>
    <property type="match status" value="1"/>
</dbReference>
<dbReference type="PANTHER" id="PTHR15238">
    <property type="entry name" value="54S RIBOSOMAL PROTEIN L39, MITOCHONDRIAL"/>
    <property type="match status" value="1"/>
</dbReference>
<dbReference type="PANTHER" id="PTHR15238:SF1">
    <property type="entry name" value="LARGE RIBOSOMAL SUBUNIT PROTEIN BL33M"/>
    <property type="match status" value="1"/>
</dbReference>
<dbReference type="Pfam" id="PF00471">
    <property type="entry name" value="Ribosomal_L33"/>
    <property type="match status" value="1"/>
</dbReference>
<dbReference type="SUPFAM" id="SSF57829">
    <property type="entry name" value="Zn-binding ribosomal proteins"/>
    <property type="match status" value="1"/>
</dbReference>
<dbReference type="PROSITE" id="PS00582">
    <property type="entry name" value="RIBOSOMAL_L33"/>
    <property type="match status" value="1"/>
</dbReference>
<protein>
    <recommendedName>
        <fullName evidence="1">Large ribosomal subunit protein bL33</fullName>
    </recommendedName>
    <alternativeName>
        <fullName evidence="2">50S ribosomal protein L33</fullName>
    </alternativeName>
</protein>
<feature type="chain" id="PRO_1000004217" description="Large ribosomal subunit protein bL33">
    <location>
        <begin position="1"/>
        <end position="55"/>
    </location>
</feature>